<sequence>MKKLQNVFAAIKTGLLAKATSVTVIGSKRVFEILSRFENEGLIRGFQIIDISKNKVSIYLKYKQDMTSLLSKIKVVSVNKEKLYIKGKLLKKLNTGVNMYFVESKFGLQTLPQLKIRNKRLYAPLGGEIKYIVEINKVNPKIQELIKKKHEI</sequence>
<name>RT08_DICDI</name>
<evidence type="ECO:0000305" key="1"/>
<feature type="chain" id="PRO_0000312380" description="Small ribosomal subunit protein uS8m">
    <location>
        <begin position="1"/>
        <end position="152"/>
    </location>
</feature>
<proteinExistence type="inferred from homology"/>
<geneLocation type="mitochondrion"/>
<protein>
    <recommendedName>
        <fullName evidence="1">Small ribosomal subunit protein uS8m</fullName>
    </recommendedName>
    <alternativeName>
        <fullName>Ribosomal protein S8, mitochondrial</fullName>
    </alternativeName>
</protein>
<organism>
    <name type="scientific">Dictyostelium discoideum</name>
    <name type="common">Social amoeba</name>
    <dbReference type="NCBI Taxonomy" id="44689"/>
    <lineage>
        <taxon>Eukaryota</taxon>
        <taxon>Amoebozoa</taxon>
        <taxon>Evosea</taxon>
        <taxon>Eumycetozoa</taxon>
        <taxon>Dictyostelia</taxon>
        <taxon>Dictyosteliales</taxon>
        <taxon>Dictyosteliaceae</taxon>
        <taxon>Dictyostelium</taxon>
    </lineage>
</organism>
<dbReference type="EMBL" id="D63523">
    <property type="protein sequence ID" value="BAA23573.1"/>
    <property type="molecule type" value="Genomic_DNA"/>
</dbReference>
<dbReference type="EMBL" id="AB000109">
    <property type="protein sequence ID" value="BAA78081.1"/>
    <property type="molecule type" value="Genomic_DNA"/>
</dbReference>
<dbReference type="PIR" id="T43778">
    <property type="entry name" value="T43778"/>
</dbReference>
<dbReference type="RefSeq" id="NP_050099.1">
    <property type="nucleotide sequence ID" value="NC_000895.1"/>
</dbReference>
<dbReference type="SMR" id="O21036"/>
<dbReference type="GeneID" id="2193924"/>
<dbReference type="KEGG" id="ddi:DidioMp32"/>
<dbReference type="dictyBase" id="DDB_G0294060">
    <property type="gene designation" value="mrps8"/>
</dbReference>
<dbReference type="VEuPathDB" id="AmoebaDB:DidioMp32"/>
<dbReference type="InParanoid" id="O21036"/>
<dbReference type="PRO" id="PR:O21036"/>
<dbReference type="Proteomes" id="UP000002195">
    <property type="component" value="Mitochondrion"/>
</dbReference>
<dbReference type="GO" id="GO:0005739">
    <property type="term" value="C:mitochondrion"/>
    <property type="evidence" value="ECO:0007669"/>
    <property type="project" value="UniProtKB-SubCell"/>
</dbReference>
<dbReference type="GO" id="GO:1990904">
    <property type="term" value="C:ribonucleoprotein complex"/>
    <property type="evidence" value="ECO:0007669"/>
    <property type="project" value="UniProtKB-KW"/>
</dbReference>
<dbReference type="GO" id="GO:0005840">
    <property type="term" value="C:ribosome"/>
    <property type="evidence" value="ECO:0007669"/>
    <property type="project" value="UniProtKB-KW"/>
</dbReference>
<dbReference type="GO" id="GO:0003735">
    <property type="term" value="F:structural constituent of ribosome"/>
    <property type="evidence" value="ECO:0007669"/>
    <property type="project" value="InterPro"/>
</dbReference>
<dbReference type="GO" id="GO:0006412">
    <property type="term" value="P:translation"/>
    <property type="evidence" value="ECO:0007669"/>
    <property type="project" value="InterPro"/>
</dbReference>
<dbReference type="Gene3D" id="3.30.1370.30">
    <property type="match status" value="1"/>
</dbReference>
<dbReference type="InterPro" id="IPR000630">
    <property type="entry name" value="Ribosomal_uS8"/>
</dbReference>
<dbReference type="InterPro" id="IPR035987">
    <property type="entry name" value="Ribosomal_uS8_sf"/>
</dbReference>
<dbReference type="Pfam" id="PF00410">
    <property type="entry name" value="Ribosomal_S8"/>
    <property type="match status" value="1"/>
</dbReference>
<dbReference type="SUPFAM" id="SSF56047">
    <property type="entry name" value="Ribosomal protein S8"/>
    <property type="match status" value="1"/>
</dbReference>
<keyword id="KW-0496">Mitochondrion</keyword>
<keyword id="KW-1185">Reference proteome</keyword>
<keyword id="KW-0687">Ribonucleoprotein</keyword>
<keyword id="KW-0689">Ribosomal protein</keyword>
<gene>
    <name type="primary">mrps8</name>
    <name type="synonym">rps8</name>
    <name type="ORF">DDB_G0294060</name>
</gene>
<reference key="1">
    <citation type="journal article" date="1998" name="Curr. Genet.">
        <title>A ribosomal protein gene cluster is encoded in the mitochondrial DNA of Dictyostelium discoideum: UGA termination codons and similarity of gene order to Acanthamoeba castellanii.</title>
        <authorList>
            <person name="Iwamoto M."/>
            <person name="Pi M."/>
            <person name="Kurihara M."/>
            <person name="Morio T."/>
            <person name="Tanaka Y."/>
        </authorList>
    </citation>
    <scope>NUCLEOTIDE SEQUENCE [GENOMIC DNA]</scope>
    <source>
        <strain>AX3</strain>
    </source>
</reference>
<reference key="2">
    <citation type="journal article" date="2000" name="Mol. Gen. Genet.">
        <title>The mitochondrial DNA of Dictyostelium discoideum: complete sequence, gene content and genome organization.</title>
        <authorList>
            <person name="Ogawa S."/>
            <person name="Yoshino R."/>
            <person name="Angata K."/>
            <person name="Iwamoto M."/>
            <person name="Pi M."/>
            <person name="Kuroe K."/>
            <person name="Matsuo K."/>
            <person name="Morio T."/>
            <person name="Urushihara H."/>
            <person name="Yanagisawa K."/>
            <person name="Tanaka Y."/>
        </authorList>
    </citation>
    <scope>NUCLEOTIDE SEQUENCE [LARGE SCALE GENOMIC DNA]</scope>
    <source>
        <strain>AX3</strain>
    </source>
</reference>
<comment type="subcellular location">
    <subcellularLocation>
        <location>Mitochondrion</location>
    </subcellularLocation>
</comment>
<comment type="similarity">
    <text evidence="1">Belongs to the universal ribosomal protein uS8 family.</text>
</comment>
<accession>O21036</accession>